<reference key="1">
    <citation type="journal article" date="2004" name="J. Bacteriol.">
        <title>Complete genome sequence of Rickettsia typhi and comparison with sequences of other Rickettsiae.</title>
        <authorList>
            <person name="McLeod M.P."/>
            <person name="Qin X."/>
            <person name="Karpathy S.E."/>
            <person name="Gioia J."/>
            <person name="Highlander S.K."/>
            <person name="Fox G.E."/>
            <person name="McNeill T.Z."/>
            <person name="Jiang H."/>
            <person name="Muzny D."/>
            <person name="Jacob L.S."/>
            <person name="Hawes A.C."/>
            <person name="Sodergren E."/>
            <person name="Gill R."/>
            <person name="Hume J."/>
            <person name="Morgan M."/>
            <person name="Fan G."/>
            <person name="Amin A.G."/>
            <person name="Gibbs R.A."/>
            <person name="Hong C."/>
            <person name="Yu X.-J."/>
            <person name="Walker D.H."/>
            <person name="Weinstock G.M."/>
        </authorList>
    </citation>
    <scope>NUCLEOTIDE SEQUENCE [LARGE SCALE GENOMIC DNA]</scope>
    <source>
        <strain>ATCC VR-144 / Wilmington</strain>
    </source>
</reference>
<proteinExistence type="inferred from homology"/>
<feature type="chain" id="PRO_0000278006" description="GTPase Era">
    <location>
        <begin position="1"/>
        <end position="295"/>
    </location>
</feature>
<feature type="domain" description="Era-type G" evidence="2">
    <location>
        <begin position="7"/>
        <end position="176"/>
    </location>
</feature>
<feature type="domain" description="KH type-2" evidence="1">
    <location>
        <begin position="204"/>
        <end position="281"/>
    </location>
</feature>
<feature type="region of interest" description="G1" evidence="2">
    <location>
        <begin position="15"/>
        <end position="22"/>
    </location>
</feature>
<feature type="region of interest" description="G2" evidence="2">
    <location>
        <begin position="41"/>
        <end position="45"/>
    </location>
</feature>
<feature type="region of interest" description="G3" evidence="2">
    <location>
        <begin position="62"/>
        <end position="65"/>
    </location>
</feature>
<feature type="region of interest" description="G4" evidence="2">
    <location>
        <begin position="124"/>
        <end position="127"/>
    </location>
</feature>
<feature type="region of interest" description="G5" evidence="2">
    <location>
        <begin position="152"/>
        <end position="154"/>
    </location>
</feature>
<feature type="binding site" evidence="1">
    <location>
        <begin position="15"/>
        <end position="22"/>
    </location>
    <ligand>
        <name>GTP</name>
        <dbReference type="ChEBI" id="CHEBI:37565"/>
    </ligand>
</feature>
<feature type="binding site" evidence="1">
    <location>
        <begin position="62"/>
        <end position="66"/>
    </location>
    <ligand>
        <name>GTP</name>
        <dbReference type="ChEBI" id="CHEBI:37565"/>
    </ligand>
</feature>
<feature type="binding site" evidence="1">
    <location>
        <begin position="124"/>
        <end position="127"/>
    </location>
    <ligand>
        <name>GTP</name>
        <dbReference type="ChEBI" id="CHEBI:37565"/>
    </ligand>
</feature>
<protein>
    <recommendedName>
        <fullName evidence="1">GTPase Era</fullName>
    </recommendedName>
</protein>
<keyword id="KW-0997">Cell inner membrane</keyword>
<keyword id="KW-1003">Cell membrane</keyword>
<keyword id="KW-0963">Cytoplasm</keyword>
<keyword id="KW-0342">GTP-binding</keyword>
<keyword id="KW-0472">Membrane</keyword>
<keyword id="KW-0547">Nucleotide-binding</keyword>
<keyword id="KW-0690">Ribosome biogenesis</keyword>
<keyword id="KW-0694">RNA-binding</keyword>
<keyword id="KW-0699">rRNA-binding</keyword>
<organism>
    <name type="scientific">Rickettsia typhi (strain ATCC VR-144 / Wilmington)</name>
    <dbReference type="NCBI Taxonomy" id="257363"/>
    <lineage>
        <taxon>Bacteria</taxon>
        <taxon>Pseudomonadati</taxon>
        <taxon>Pseudomonadota</taxon>
        <taxon>Alphaproteobacteria</taxon>
        <taxon>Rickettsiales</taxon>
        <taxon>Rickettsiaceae</taxon>
        <taxon>Rickettsieae</taxon>
        <taxon>Rickettsia</taxon>
        <taxon>typhus group</taxon>
    </lineage>
</organism>
<comment type="function">
    <text evidence="1">An essential GTPase that binds both GDP and GTP, with rapid nucleotide exchange. Plays a role in 16S rRNA processing and 30S ribosomal subunit biogenesis and possibly also in cell cycle regulation and energy metabolism.</text>
</comment>
<comment type="subunit">
    <text evidence="1">Monomer.</text>
</comment>
<comment type="subcellular location">
    <subcellularLocation>
        <location>Cytoplasm</location>
    </subcellularLocation>
    <subcellularLocation>
        <location evidence="1">Cell inner membrane</location>
        <topology evidence="1">Peripheral membrane protein</topology>
    </subcellularLocation>
</comment>
<comment type="similarity">
    <text evidence="1 2">Belongs to the TRAFAC class TrmE-Era-EngA-EngB-Septin-like GTPase superfamily. Era GTPase family.</text>
</comment>
<sequence length="295" mass="33745">MINQIQKTISVCIIGRPNSGKSTLLNRIIGEKLSIVTPKVQTTRSIITGIITLKDTQIILYDTPGIFEPKGMLEKAMVRCAWSSLYSADLVLSIIDSLKPLDDMAHNILNQFCLLNIVPIFLLNKIDIESKYLNDIKAFLKISHPKSLLFPISALCGKNVDVLLKYIKSKAKVSPWLYADDDITNLPMRFIAAEITREQLFLNLQQELPYKLTVQTEKFEELKDKSIKINQVIVISRESYKAIILGKNGTKIKDIGVKSRIQMEQLFCVPVHLFLFVKVHALWENKQEFYQYMKI</sequence>
<gene>
    <name evidence="1" type="primary">era</name>
    <name type="ordered locus">RT0018</name>
</gene>
<name>ERA_RICTY</name>
<accession>Q68XY6</accession>
<evidence type="ECO:0000255" key="1">
    <source>
        <dbReference type="HAMAP-Rule" id="MF_00367"/>
    </source>
</evidence>
<evidence type="ECO:0000255" key="2">
    <source>
        <dbReference type="PROSITE-ProRule" id="PRU01050"/>
    </source>
</evidence>
<dbReference type="EMBL" id="AE017197">
    <property type="protein sequence ID" value="AAU03506.1"/>
    <property type="molecule type" value="Genomic_DNA"/>
</dbReference>
<dbReference type="RefSeq" id="WP_011190493.1">
    <property type="nucleotide sequence ID" value="NC_006142.1"/>
</dbReference>
<dbReference type="SMR" id="Q68XY6"/>
<dbReference type="KEGG" id="rty:RT0018"/>
<dbReference type="eggNOG" id="COG1159">
    <property type="taxonomic scope" value="Bacteria"/>
</dbReference>
<dbReference type="HOGENOM" id="CLU_038009_1_1_5"/>
<dbReference type="OrthoDB" id="9805918at2"/>
<dbReference type="Proteomes" id="UP000000604">
    <property type="component" value="Chromosome"/>
</dbReference>
<dbReference type="GO" id="GO:0005829">
    <property type="term" value="C:cytosol"/>
    <property type="evidence" value="ECO:0007669"/>
    <property type="project" value="TreeGrafter"/>
</dbReference>
<dbReference type="GO" id="GO:0005886">
    <property type="term" value="C:plasma membrane"/>
    <property type="evidence" value="ECO:0007669"/>
    <property type="project" value="UniProtKB-SubCell"/>
</dbReference>
<dbReference type="GO" id="GO:0005525">
    <property type="term" value="F:GTP binding"/>
    <property type="evidence" value="ECO:0007669"/>
    <property type="project" value="UniProtKB-UniRule"/>
</dbReference>
<dbReference type="GO" id="GO:0003924">
    <property type="term" value="F:GTPase activity"/>
    <property type="evidence" value="ECO:0007669"/>
    <property type="project" value="UniProtKB-UniRule"/>
</dbReference>
<dbReference type="GO" id="GO:0043024">
    <property type="term" value="F:ribosomal small subunit binding"/>
    <property type="evidence" value="ECO:0007669"/>
    <property type="project" value="TreeGrafter"/>
</dbReference>
<dbReference type="GO" id="GO:0070181">
    <property type="term" value="F:small ribosomal subunit rRNA binding"/>
    <property type="evidence" value="ECO:0007669"/>
    <property type="project" value="UniProtKB-UniRule"/>
</dbReference>
<dbReference type="GO" id="GO:0000028">
    <property type="term" value="P:ribosomal small subunit assembly"/>
    <property type="evidence" value="ECO:0007669"/>
    <property type="project" value="TreeGrafter"/>
</dbReference>
<dbReference type="CDD" id="cd04163">
    <property type="entry name" value="Era"/>
    <property type="match status" value="1"/>
</dbReference>
<dbReference type="CDD" id="cd22534">
    <property type="entry name" value="KH-II_Era"/>
    <property type="match status" value="1"/>
</dbReference>
<dbReference type="Gene3D" id="3.30.300.20">
    <property type="match status" value="1"/>
</dbReference>
<dbReference type="Gene3D" id="3.40.50.300">
    <property type="entry name" value="P-loop containing nucleotide triphosphate hydrolases"/>
    <property type="match status" value="1"/>
</dbReference>
<dbReference type="HAMAP" id="MF_00367">
    <property type="entry name" value="GTPase_Era"/>
    <property type="match status" value="1"/>
</dbReference>
<dbReference type="InterPro" id="IPR030388">
    <property type="entry name" value="G_ERA_dom"/>
</dbReference>
<dbReference type="InterPro" id="IPR006073">
    <property type="entry name" value="GTP-bd"/>
</dbReference>
<dbReference type="InterPro" id="IPR005662">
    <property type="entry name" value="GTPase_Era-like"/>
</dbReference>
<dbReference type="InterPro" id="IPR015946">
    <property type="entry name" value="KH_dom-like_a/b"/>
</dbReference>
<dbReference type="InterPro" id="IPR004044">
    <property type="entry name" value="KH_dom_type_2"/>
</dbReference>
<dbReference type="InterPro" id="IPR009019">
    <property type="entry name" value="KH_sf_prok-type"/>
</dbReference>
<dbReference type="InterPro" id="IPR027417">
    <property type="entry name" value="P-loop_NTPase"/>
</dbReference>
<dbReference type="InterPro" id="IPR005225">
    <property type="entry name" value="Small_GTP-bd"/>
</dbReference>
<dbReference type="NCBIfam" id="TIGR00436">
    <property type="entry name" value="era"/>
    <property type="match status" value="1"/>
</dbReference>
<dbReference type="NCBIfam" id="NF000908">
    <property type="entry name" value="PRK00089.1"/>
    <property type="match status" value="1"/>
</dbReference>
<dbReference type="NCBIfam" id="TIGR00231">
    <property type="entry name" value="small_GTP"/>
    <property type="match status" value="1"/>
</dbReference>
<dbReference type="PANTHER" id="PTHR42698">
    <property type="entry name" value="GTPASE ERA"/>
    <property type="match status" value="1"/>
</dbReference>
<dbReference type="PANTHER" id="PTHR42698:SF1">
    <property type="entry name" value="GTPASE ERA, MITOCHONDRIAL"/>
    <property type="match status" value="1"/>
</dbReference>
<dbReference type="Pfam" id="PF07650">
    <property type="entry name" value="KH_2"/>
    <property type="match status" value="1"/>
</dbReference>
<dbReference type="Pfam" id="PF01926">
    <property type="entry name" value="MMR_HSR1"/>
    <property type="match status" value="1"/>
</dbReference>
<dbReference type="SUPFAM" id="SSF52540">
    <property type="entry name" value="P-loop containing nucleoside triphosphate hydrolases"/>
    <property type="match status" value="1"/>
</dbReference>
<dbReference type="SUPFAM" id="SSF54814">
    <property type="entry name" value="Prokaryotic type KH domain (KH-domain type II)"/>
    <property type="match status" value="1"/>
</dbReference>
<dbReference type="PROSITE" id="PS51713">
    <property type="entry name" value="G_ERA"/>
    <property type="match status" value="1"/>
</dbReference>
<dbReference type="PROSITE" id="PS50823">
    <property type="entry name" value="KH_TYPE_2"/>
    <property type="match status" value="1"/>
</dbReference>